<reference key="1">
    <citation type="journal article" date="2006" name="Proc. Natl. Acad. Sci. U.S.A.">
        <title>Molecular genetic anatomy of inter- and intraserotype variation in the human bacterial pathogen group A Streptococcus.</title>
        <authorList>
            <person name="Beres S.B."/>
            <person name="Richter E.W."/>
            <person name="Nagiec M.J."/>
            <person name="Sumby P."/>
            <person name="Porcella S.F."/>
            <person name="DeLeo F.R."/>
            <person name="Musser J.M."/>
        </authorList>
    </citation>
    <scope>NUCLEOTIDE SEQUENCE [LARGE SCALE GENOMIC DNA]</scope>
    <source>
        <strain>MGAS10270</strain>
    </source>
</reference>
<protein>
    <recommendedName>
        <fullName evidence="1">Ribonuclease Y</fullName>
        <shortName evidence="1">RNase Y</shortName>
        <ecNumber evidence="1">3.1.-.-</ecNumber>
    </recommendedName>
</protein>
<feature type="chain" id="PRO_0000344945" description="Ribonuclease Y">
    <location>
        <begin position="1"/>
        <end position="535"/>
    </location>
</feature>
<feature type="transmembrane region" description="Helical" evidence="1">
    <location>
        <begin position="4"/>
        <end position="24"/>
    </location>
</feature>
<feature type="domain" description="KH" evidence="1">
    <location>
        <begin position="225"/>
        <end position="285"/>
    </location>
</feature>
<feature type="domain" description="HD" evidence="2">
    <location>
        <begin position="351"/>
        <end position="444"/>
    </location>
</feature>
<feature type="region of interest" description="Disordered" evidence="3">
    <location>
        <begin position="118"/>
        <end position="141"/>
    </location>
</feature>
<sequence>MVNIILLIVSALIGLILGYALISIRLKSAKEAAELTLLNAEQEAVDIRGKAEVDAEHIKKTAKRESKANRKELLLKAKEEARKYREEIEQEFKSERQELKQLETRLAERSLTLDRKDENLSSKEKVLDSKEQSLTDKSKHIDERQLQVEKLEEEKKAELEKVAAMTIAEAREVILMETENKLTHEIATRIRDAERDIKDRTVKTAKDLLAQAMQRLAGEYVTEQTITSVHLPDDNMKGRIIGREGRNIRTLESLTGIDVIIDDTPEVVILSGFDPIRREIARMTLESLIADGRIHPARIEELVEKNRLEMDNRIREYGEAAAYEIGAPNLHPDLIKIMGRLQFRTSFGQNVLRHSVEVGKLAGILAGELGENVALARRAGFLHDMGKAIDREVEGSHVEIGMEFARKYKEHPVVVNTIASHHGDVEPDSVIAVLVAAADALSSARPGARNESMENYIKRLRDLEEIATSFDGVQNSFALQAGREIRIMVQPEKISDDQVVILSHKVREKIEHNLDYPGNIKVTVIREMRAVDYAK</sequence>
<evidence type="ECO:0000255" key="1">
    <source>
        <dbReference type="HAMAP-Rule" id="MF_00335"/>
    </source>
</evidence>
<evidence type="ECO:0000255" key="2">
    <source>
        <dbReference type="PROSITE-ProRule" id="PRU01175"/>
    </source>
</evidence>
<evidence type="ECO:0000256" key="3">
    <source>
        <dbReference type="SAM" id="MobiDB-lite"/>
    </source>
</evidence>
<keyword id="KW-1003">Cell membrane</keyword>
<keyword id="KW-0255">Endonuclease</keyword>
<keyword id="KW-0378">Hydrolase</keyword>
<keyword id="KW-0472">Membrane</keyword>
<keyword id="KW-0540">Nuclease</keyword>
<keyword id="KW-0694">RNA-binding</keyword>
<keyword id="KW-0812">Transmembrane</keyword>
<keyword id="KW-1133">Transmembrane helix</keyword>
<organism>
    <name type="scientific">Streptococcus pyogenes serotype M2 (strain MGAS10270)</name>
    <dbReference type="NCBI Taxonomy" id="370552"/>
    <lineage>
        <taxon>Bacteria</taxon>
        <taxon>Bacillati</taxon>
        <taxon>Bacillota</taxon>
        <taxon>Bacilli</taxon>
        <taxon>Lactobacillales</taxon>
        <taxon>Streptococcaceae</taxon>
        <taxon>Streptococcus</taxon>
    </lineage>
</organism>
<comment type="function">
    <text evidence="1">Endoribonuclease that initiates mRNA decay.</text>
</comment>
<comment type="subcellular location">
    <subcellularLocation>
        <location evidence="1">Cell membrane</location>
        <topology evidence="1">Single-pass membrane protein</topology>
    </subcellularLocation>
</comment>
<comment type="similarity">
    <text evidence="1">Belongs to the RNase Y family.</text>
</comment>
<gene>
    <name evidence="1" type="primary">rny</name>
    <name type="ordered locus">MGAS10270_Spy1458</name>
</gene>
<name>RNY_STRPD</name>
<proteinExistence type="inferred from homology"/>
<dbReference type="EC" id="3.1.-.-" evidence="1"/>
<dbReference type="EMBL" id="CP000260">
    <property type="protein sequence ID" value="ABF34523.1"/>
    <property type="molecule type" value="Genomic_DNA"/>
</dbReference>
<dbReference type="SMR" id="Q1JFN6"/>
<dbReference type="KEGG" id="sph:MGAS10270_Spy1458"/>
<dbReference type="HOGENOM" id="CLU_028328_1_0_9"/>
<dbReference type="Proteomes" id="UP000002436">
    <property type="component" value="Chromosome"/>
</dbReference>
<dbReference type="GO" id="GO:0005886">
    <property type="term" value="C:plasma membrane"/>
    <property type="evidence" value="ECO:0007669"/>
    <property type="project" value="UniProtKB-SubCell"/>
</dbReference>
<dbReference type="GO" id="GO:0003723">
    <property type="term" value="F:RNA binding"/>
    <property type="evidence" value="ECO:0007669"/>
    <property type="project" value="UniProtKB-UniRule"/>
</dbReference>
<dbReference type="GO" id="GO:0004521">
    <property type="term" value="F:RNA endonuclease activity"/>
    <property type="evidence" value="ECO:0007669"/>
    <property type="project" value="UniProtKB-UniRule"/>
</dbReference>
<dbReference type="GO" id="GO:0006402">
    <property type="term" value="P:mRNA catabolic process"/>
    <property type="evidence" value="ECO:0007669"/>
    <property type="project" value="UniProtKB-UniRule"/>
</dbReference>
<dbReference type="CDD" id="cd00077">
    <property type="entry name" value="HDc"/>
    <property type="match status" value="1"/>
</dbReference>
<dbReference type="CDD" id="cd22431">
    <property type="entry name" value="KH-I_RNaseY"/>
    <property type="match status" value="1"/>
</dbReference>
<dbReference type="FunFam" id="1.10.3210.10:FF:000003">
    <property type="entry name" value="Ribonuclease Y"/>
    <property type="match status" value="1"/>
</dbReference>
<dbReference type="Gene3D" id="1.10.3210.10">
    <property type="entry name" value="Hypothetical protein af1432"/>
    <property type="match status" value="1"/>
</dbReference>
<dbReference type="Gene3D" id="3.30.1370.10">
    <property type="entry name" value="K Homology domain, type 1"/>
    <property type="match status" value="1"/>
</dbReference>
<dbReference type="HAMAP" id="MF_00335">
    <property type="entry name" value="RNase_Y"/>
    <property type="match status" value="1"/>
</dbReference>
<dbReference type="InterPro" id="IPR003607">
    <property type="entry name" value="HD/PDEase_dom"/>
</dbReference>
<dbReference type="InterPro" id="IPR006674">
    <property type="entry name" value="HD_domain"/>
</dbReference>
<dbReference type="InterPro" id="IPR006675">
    <property type="entry name" value="HDIG_dom"/>
</dbReference>
<dbReference type="InterPro" id="IPR004087">
    <property type="entry name" value="KH_dom"/>
</dbReference>
<dbReference type="InterPro" id="IPR004088">
    <property type="entry name" value="KH_dom_type_1"/>
</dbReference>
<dbReference type="InterPro" id="IPR036612">
    <property type="entry name" value="KH_dom_type_1_sf"/>
</dbReference>
<dbReference type="InterPro" id="IPR017705">
    <property type="entry name" value="Ribonuclease_Y"/>
</dbReference>
<dbReference type="InterPro" id="IPR022711">
    <property type="entry name" value="RNase_Y_N"/>
</dbReference>
<dbReference type="NCBIfam" id="TIGR00277">
    <property type="entry name" value="HDIG"/>
    <property type="match status" value="1"/>
</dbReference>
<dbReference type="NCBIfam" id="NF000997">
    <property type="entry name" value="PRK00106.1"/>
    <property type="match status" value="1"/>
</dbReference>
<dbReference type="NCBIfam" id="TIGR03319">
    <property type="entry name" value="RNase_Y"/>
    <property type="match status" value="1"/>
</dbReference>
<dbReference type="PANTHER" id="PTHR12826">
    <property type="entry name" value="RIBONUCLEASE Y"/>
    <property type="match status" value="1"/>
</dbReference>
<dbReference type="PANTHER" id="PTHR12826:SF15">
    <property type="entry name" value="RIBONUCLEASE Y"/>
    <property type="match status" value="1"/>
</dbReference>
<dbReference type="Pfam" id="PF01966">
    <property type="entry name" value="HD"/>
    <property type="match status" value="1"/>
</dbReference>
<dbReference type="Pfam" id="PF00013">
    <property type="entry name" value="KH_1"/>
    <property type="match status" value="1"/>
</dbReference>
<dbReference type="Pfam" id="PF12072">
    <property type="entry name" value="RNase_Y_N"/>
    <property type="match status" value="1"/>
</dbReference>
<dbReference type="SMART" id="SM00471">
    <property type="entry name" value="HDc"/>
    <property type="match status" value="1"/>
</dbReference>
<dbReference type="SMART" id="SM00322">
    <property type="entry name" value="KH"/>
    <property type="match status" value="1"/>
</dbReference>
<dbReference type="SUPFAM" id="SSF54791">
    <property type="entry name" value="Eukaryotic type KH-domain (KH-domain type I)"/>
    <property type="match status" value="1"/>
</dbReference>
<dbReference type="SUPFAM" id="SSF109604">
    <property type="entry name" value="HD-domain/PDEase-like"/>
    <property type="match status" value="1"/>
</dbReference>
<dbReference type="PROSITE" id="PS51831">
    <property type="entry name" value="HD"/>
    <property type="match status" value="1"/>
</dbReference>
<dbReference type="PROSITE" id="PS50084">
    <property type="entry name" value="KH_TYPE_1"/>
    <property type="match status" value="1"/>
</dbReference>
<accession>Q1JFN6</accession>